<protein>
    <recommendedName>
        <fullName evidence="1">Methionine--tRNA ligase</fullName>
        <ecNumber evidence="1">6.1.1.10</ecNumber>
    </recommendedName>
    <alternativeName>
        <fullName evidence="1">Methionyl-tRNA synthetase</fullName>
        <shortName evidence="1">MetRS</shortName>
    </alternativeName>
</protein>
<name>SYM_BORT9</name>
<accession>A1R019</accession>
<reference key="1">
    <citation type="submission" date="2004-12" db="EMBL/GenBank/DDBJ databases">
        <title>The genome sequence of Borrelia hermsii and Borrelia turicatae: comparative analysis of two agents of endemic N. America relapsing fever.</title>
        <authorList>
            <person name="Porcella S.F."/>
            <person name="Raffel S.J."/>
            <person name="Schrumpf M.E."/>
            <person name="Montgomery B."/>
            <person name="Smith T."/>
            <person name="Schwan T.G."/>
        </authorList>
    </citation>
    <scope>NUCLEOTIDE SEQUENCE [LARGE SCALE GENOMIC DNA]</scope>
    <source>
        <strain>91E135</strain>
    </source>
</reference>
<proteinExistence type="inferred from homology"/>
<organism>
    <name type="scientific">Borrelia turicatae (strain 91E135)</name>
    <dbReference type="NCBI Taxonomy" id="314724"/>
    <lineage>
        <taxon>Bacteria</taxon>
        <taxon>Pseudomonadati</taxon>
        <taxon>Spirochaetota</taxon>
        <taxon>Spirochaetia</taxon>
        <taxon>Spirochaetales</taxon>
        <taxon>Borreliaceae</taxon>
        <taxon>Borrelia</taxon>
    </lineage>
</organism>
<comment type="function">
    <text evidence="1">Is required not only for elongation of protein synthesis but also for the initiation of all mRNA translation through initiator tRNA(fMet) aminoacylation.</text>
</comment>
<comment type="catalytic activity">
    <reaction evidence="1">
        <text>tRNA(Met) + L-methionine + ATP = L-methionyl-tRNA(Met) + AMP + diphosphate</text>
        <dbReference type="Rhea" id="RHEA:13481"/>
        <dbReference type="Rhea" id="RHEA-COMP:9667"/>
        <dbReference type="Rhea" id="RHEA-COMP:9698"/>
        <dbReference type="ChEBI" id="CHEBI:30616"/>
        <dbReference type="ChEBI" id="CHEBI:33019"/>
        <dbReference type="ChEBI" id="CHEBI:57844"/>
        <dbReference type="ChEBI" id="CHEBI:78442"/>
        <dbReference type="ChEBI" id="CHEBI:78530"/>
        <dbReference type="ChEBI" id="CHEBI:456215"/>
        <dbReference type="EC" id="6.1.1.10"/>
    </reaction>
</comment>
<comment type="cofactor">
    <cofactor evidence="1">
        <name>Zn(2+)</name>
        <dbReference type="ChEBI" id="CHEBI:29105"/>
    </cofactor>
    <text evidence="1">Binds 1 zinc ion per subunit.</text>
</comment>
<comment type="subunit">
    <text evidence="1">Homodimer.</text>
</comment>
<comment type="subcellular location">
    <subcellularLocation>
        <location evidence="1">Cytoplasm</location>
    </subcellularLocation>
</comment>
<comment type="similarity">
    <text evidence="1">Belongs to the class-I aminoacyl-tRNA synthetase family. MetG type 1 subfamily.</text>
</comment>
<sequence length="726" mass="84286">MKKKNLITAALPYVNNIPHLGNLVQVLSADAFARYSRMMDIDTLYVCGTDEYGTATETKALIEKTTPEELCNRYYAIHKSIYEWFNIKFDIFGRTTNKSHKQTVQDLFLKLEKNGYITDKESEQFFCQQDQMFLADRYVTGECPNCGNNAKGDQCENCSKLLAPIDLINPKCIICKNIPIIKTTKHLYINLPKIKNELIHWMQTTEHNTNWNTNAIKTTNAFLRDGLKERAITRDLKWGIPVPKKEYENKVFYVWFDAPIGYISITKEISKDWESWWKNNKETNLVQFIGKDNILFHTVIFPAIKLGSKENWTMLGKLASSEYLNYEHLKFSKSAGIGIFGNDVITTGISADIWRFYIYYNRPEKSDFQFMWDDFMERINSELIGNFSNLVNRVLTFYKKFFGDKIDTIEIKEDFWKEINLKYDKTLNFFKQIELKSALKEILDISRIGNKIFQDKEPWKTKDSTPKKTKELLLNLIYLIRDLSILISPFIPHTSDKIRRFFGESYEISNKFLGTNLGLNTIQFTEVLFTKLEKELIDSLKLKYSGGKNMQDEQTENPINLFSEKVCLKVVQIKTIERNPDAEKLFILKLDDGTPDGKQIVSSLADYYKEEKLIGKHIIIVDNLKPAKFRGIKSEGMLIATEDENKNFKVIIVEDFKDNPIPGERIILESDSDKKLKLPSKISIDKFLKTQIVAENGELKVNGINLILEHSKEKILSREIPNGKVY</sequence>
<feature type="chain" id="PRO_1000199281" description="Methionine--tRNA ligase">
    <location>
        <begin position="1"/>
        <end position="726"/>
    </location>
</feature>
<feature type="domain" description="tRNA-binding" evidence="1">
    <location>
        <begin position="562"/>
        <end position="667"/>
    </location>
</feature>
<feature type="short sequence motif" description="'HIGH' region">
    <location>
        <begin position="12"/>
        <end position="22"/>
    </location>
</feature>
<feature type="short sequence motif" description="'KMSKS' region">
    <location>
        <begin position="330"/>
        <end position="334"/>
    </location>
</feature>
<feature type="binding site" evidence="1">
    <location>
        <position position="143"/>
    </location>
    <ligand>
        <name>Zn(2+)</name>
        <dbReference type="ChEBI" id="CHEBI:29105"/>
    </ligand>
</feature>
<feature type="binding site" evidence="1">
    <location>
        <position position="146"/>
    </location>
    <ligand>
        <name>Zn(2+)</name>
        <dbReference type="ChEBI" id="CHEBI:29105"/>
    </ligand>
</feature>
<feature type="binding site" evidence="1">
    <location>
        <position position="155"/>
    </location>
    <ligand>
        <name>Zn(2+)</name>
        <dbReference type="ChEBI" id="CHEBI:29105"/>
    </ligand>
</feature>
<feature type="binding site" evidence="1">
    <location>
        <position position="158"/>
    </location>
    <ligand>
        <name>Zn(2+)</name>
        <dbReference type="ChEBI" id="CHEBI:29105"/>
    </ligand>
</feature>
<feature type="binding site" evidence="1">
    <location>
        <position position="333"/>
    </location>
    <ligand>
        <name>ATP</name>
        <dbReference type="ChEBI" id="CHEBI:30616"/>
    </ligand>
</feature>
<evidence type="ECO:0000255" key="1">
    <source>
        <dbReference type="HAMAP-Rule" id="MF_00098"/>
    </source>
</evidence>
<keyword id="KW-0030">Aminoacyl-tRNA synthetase</keyword>
<keyword id="KW-0067">ATP-binding</keyword>
<keyword id="KW-0963">Cytoplasm</keyword>
<keyword id="KW-0436">Ligase</keyword>
<keyword id="KW-0479">Metal-binding</keyword>
<keyword id="KW-0547">Nucleotide-binding</keyword>
<keyword id="KW-0648">Protein biosynthesis</keyword>
<keyword id="KW-1185">Reference proteome</keyword>
<keyword id="KW-0694">RNA-binding</keyword>
<keyword id="KW-0820">tRNA-binding</keyword>
<keyword id="KW-0862">Zinc</keyword>
<dbReference type="EC" id="6.1.1.10" evidence="1"/>
<dbReference type="EMBL" id="CP000049">
    <property type="protein sequence ID" value="AAX17911.1"/>
    <property type="molecule type" value="Genomic_DNA"/>
</dbReference>
<dbReference type="SMR" id="A1R019"/>
<dbReference type="KEGG" id="btu:BT0587"/>
<dbReference type="eggNOG" id="COG0073">
    <property type="taxonomic scope" value="Bacteria"/>
</dbReference>
<dbReference type="eggNOG" id="COG0143">
    <property type="taxonomic scope" value="Bacteria"/>
</dbReference>
<dbReference type="HOGENOM" id="CLU_009710_3_2_12"/>
<dbReference type="Proteomes" id="UP000001205">
    <property type="component" value="Chromosome"/>
</dbReference>
<dbReference type="GO" id="GO:0017101">
    <property type="term" value="C:aminoacyl-tRNA synthetase multienzyme complex"/>
    <property type="evidence" value="ECO:0007669"/>
    <property type="project" value="TreeGrafter"/>
</dbReference>
<dbReference type="GO" id="GO:0005829">
    <property type="term" value="C:cytosol"/>
    <property type="evidence" value="ECO:0007669"/>
    <property type="project" value="TreeGrafter"/>
</dbReference>
<dbReference type="GO" id="GO:0005524">
    <property type="term" value="F:ATP binding"/>
    <property type="evidence" value="ECO:0007669"/>
    <property type="project" value="UniProtKB-UniRule"/>
</dbReference>
<dbReference type="GO" id="GO:0046872">
    <property type="term" value="F:metal ion binding"/>
    <property type="evidence" value="ECO:0007669"/>
    <property type="project" value="UniProtKB-KW"/>
</dbReference>
<dbReference type="GO" id="GO:0004825">
    <property type="term" value="F:methionine-tRNA ligase activity"/>
    <property type="evidence" value="ECO:0007669"/>
    <property type="project" value="UniProtKB-UniRule"/>
</dbReference>
<dbReference type="GO" id="GO:0000049">
    <property type="term" value="F:tRNA binding"/>
    <property type="evidence" value="ECO:0007669"/>
    <property type="project" value="UniProtKB-KW"/>
</dbReference>
<dbReference type="GO" id="GO:0006431">
    <property type="term" value="P:methionyl-tRNA aminoacylation"/>
    <property type="evidence" value="ECO:0007669"/>
    <property type="project" value="UniProtKB-UniRule"/>
</dbReference>
<dbReference type="CDD" id="cd07957">
    <property type="entry name" value="Anticodon_Ia_Met"/>
    <property type="match status" value="1"/>
</dbReference>
<dbReference type="CDD" id="cd00814">
    <property type="entry name" value="MetRS_core"/>
    <property type="match status" value="1"/>
</dbReference>
<dbReference type="CDD" id="cd02153">
    <property type="entry name" value="tRNA_bindingDomain"/>
    <property type="match status" value="1"/>
</dbReference>
<dbReference type="FunFam" id="2.20.28.20:FF:000001">
    <property type="entry name" value="Methionine--tRNA ligase"/>
    <property type="match status" value="1"/>
</dbReference>
<dbReference type="Gene3D" id="3.40.50.620">
    <property type="entry name" value="HUPs"/>
    <property type="match status" value="1"/>
</dbReference>
<dbReference type="Gene3D" id="1.10.730.10">
    <property type="entry name" value="Isoleucyl-tRNA Synthetase, Domain 1"/>
    <property type="match status" value="1"/>
</dbReference>
<dbReference type="Gene3D" id="2.20.28.20">
    <property type="entry name" value="Methionyl-tRNA synthetase, Zn-domain"/>
    <property type="match status" value="1"/>
</dbReference>
<dbReference type="Gene3D" id="2.40.50.140">
    <property type="entry name" value="Nucleic acid-binding proteins"/>
    <property type="match status" value="1"/>
</dbReference>
<dbReference type="HAMAP" id="MF_00098">
    <property type="entry name" value="Met_tRNA_synth_type1"/>
    <property type="match status" value="1"/>
</dbReference>
<dbReference type="InterPro" id="IPR001412">
    <property type="entry name" value="aa-tRNA-synth_I_CS"/>
</dbReference>
<dbReference type="InterPro" id="IPR041872">
    <property type="entry name" value="Anticodon_Met"/>
</dbReference>
<dbReference type="InterPro" id="IPR004495">
    <property type="entry name" value="Met-tRNA-synth_bsu_C"/>
</dbReference>
<dbReference type="InterPro" id="IPR023458">
    <property type="entry name" value="Met-tRNA_ligase_1"/>
</dbReference>
<dbReference type="InterPro" id="IPR014758">
    <property type="entry name" value="Met-tRNA_synth"/>
</dbReference>
<dbReference type="InterPro" id="IPR015413">
    <property type="entry name" value="Methionyl/Leucyl_tRNA_Synth"/>
</dbReference>
<dbReference type="InterPro" id="IPR033911">
    <property type="entry name" value="MetRS_core"/>
</dbReference>
<dbReference type="InterPro" id="IPR029038">
    <property type="entry name" value="MetRS_Zn"/>
</dbReference>
<dbReference type="InterPro" id="IPR012340">
    <property type="entry name" value="NA-bd_OB-fold"/>
</dbReference>
<dbReference type="InterPro" id="IPR014729">
    <property type="entry name" value="Rossmann-like_a/b/a_fold"/>
</dbReference>
<dbReference type="InterPro" id="IPR002547">
    <property type="entry name" value="tRNA-bd_dom"/>
</dbReference>
<dbReference type="InterPro" id="IPR009080">
    <property type="entry name" value="tRNAsynth_Ia_anticodon-bd"/>
</dbReference>
<dbReference type="NCBIfam" id="TIGR00398">
    <property type="entry name" value="metG"/>
    <property type="match status" value="1"/>
</dbReference>
<dbReference type="NCBIfam" id="TIGR00399">
    <property type="entry name" value="metG_C_term"/>
    <property type="match status" value="1"/>
</dbReference>
<dbReference type="NCBIfam" id="NF001100">
    <property type="entry name" value="PRK00133.1"/>
    <property type="match status" value="1"/>
</dbReference>
<dbReference type="PANTHER" id="PTHR45765">
    <property type="entry name" value="METHIONINE--TRNA LIGASE"/>
    <property type="match status" value="1"/>
</dbReference>
<dbReference type="PANTHER" id="PTHR45765:SF1">
    <property type="entry name" value="METHIONINE--TRNA LIGASE, CYTOPLASMIC"/>
    <property type="match status" value="1"/>
</dbReference>
<dbReference type="Pfam" id="PF19303">
    <property type="entry name" value="Anticodon_3"/>
    <property type="match status" value="1"/>
</dbReference>
<dbReference type="Pfam" id="PF09334">
    <property type="entry name" value="tRNA-synt_1g"/>
    <property type="match status" value="1"/>
</dbReference>
<dbReference type="Pfam" id="PF01588">
    <property type="entry name" value="tRNA_bind"/>
    <property type="match status" value="1"/>
</dbReference>
<dbReference type="PRINTS" id="PR01041">
    <property type="entry name" value="TRNASYNTHMET"/>
</dbReference>
<dbReference type="SUPFAM" id="SSF47323">
    <property type="entry name" value="Anticodon-binding domain of a subclass of class I aminoacyl-tRNA synthetases"/>
    <property type="match status" value="1"/>
</dbReference>
<dbReference type="SUPFAM" id="SSF57770">
    <property type="entry name" value="Methionyl-tRNA synthetase (MetRS), Zn-domain"/>
    <property type="match status" value="1"/>
</dbReference>
<dbReference type="SUPFAM" id="SSF50249">
    <property type="entry name" value="Nucleic acid-binding proteins"/>
    <property type="match status" value="1"/>
</dbReference>
<dbReference type="SUPFAM" id="SSF52374">
    <property type="entry name" value="Nucleotidylyl transferase"/>
    <property type="match status" value="1"/>
</dbReference>
<dbReference type="PROSITE" id="PS00178">
    <property type="entry name" value="AA_TRNA_LIGASE_I"/>
    <property type="match status" value="1"/>
</dbReference>
<dbReference type="PROSITE" id="PS50886">
    <property type="entry name" value="TRBD"/>
    <property type="match status" value="1"/>
</dbReference>
<gene>
    <name evidence="1" type="primary">metG</name>
    <name type="ordered locus">BT0587</name>
</gene>